<name>KDPA_SALG2</name>
<keyword id="KW-0997">Cell inner membrane</keyword>
<keyword id="KW-1003">Cell membrane</keyword>
<keyword id="KW-0406">Ion transport</keyword>
<keyword id="KW-0472">Membrane</keyword>
<keyword id="KW-0630">Potassium</keyword>
<keyword id="KW-0633">Potassium transport</keyword>
<keyword id="KW-0812">Transmembrane</keyword>
<keyword id="KW-1133">Transmembrane helix</keyword>
<keyword id="KW-0813">Transport</keyword>
<dbReference type="EMBL" id="AM933173">
    <property type="protein sequence ID" value="CAR36599.1"/>
    <property type="molecule type" value="Genomic_DNA"/>
</dbReference>
<dbReference type="RefSeq" id="WP_000730078.1">
    <property type="nucleotide sequence ID" value="NC_011274.1"/>
</dbReference>
<dbReference type="SMR" id="B5R671"/>
<dbReference type="KEGG" id="seg:SG0703"/>
<dbReference type="HOGENOM" id="CLU_018614_3_0_6"/>
<dbReference type="Proteomes" id="UP000008321">
    <property type="component" value="Chromosome"/>
</dbReference>
<dbReference type="GO" id="GO:0005886">
    <property type="term" value="C:plasma membrane"/>
    <property type="evidence" value="ECO:0007669"/>
    <property type="project" value="UniProtKB-SubCell"/>
</dbReference>
<dbReference type="GO" id="GO:0008556">
    <property type="term" value="F:P-type potassium transmembrane transporter activity"/>
    <property type="evidence" value="ECO:0007669"/>
    <property type="project" value="InterPro"/>
</dbReference>
<dbReference type="GO" id="GO:0030955">
    <property type="term" value="F:potassium ion binding"/>
    <property type="evidence" value="ECO:0007669"/>
    <property type="project" value="UniProtKB-UniRule"/>
</dbReference>
<dbReference type="HAMAP" id="MF_00275">
    <property type="entry name" value="KdpA"/>
    <property type="match status" value="1"/>
</dbReference>
<dbReference type="InterPro" id="IPR004623">
    <property type="entry name" value="KdpA"/>
</dbReference>
<dbReference type="NCBIfam" id="TIGR00680">
    <property type="entry name" value="kdpA"/>
    <property type="match status" value="1"/>
</dbReference>
<dbReference type="PANTHER" id="PTHR30607">
    <property type="entry name" value="POTASSIUM-TRANSPORTING ATPASE A CHAIN"/>
    <property type="match status" value="1"/>
</dbReference>
<dbReference type="PANTHER" id="PTHR30607:SF2">
    <property type="entry name" value="POTASSIUM-TRANSPORTING ATPASE POTASSIUM-BINDING SUBUNIT"/>
    <property type="match status" value="1"/>
</dbReference>
<dbReference type="Pfam" id="PF03814">
    <property type="entry name" value="KdpA"/>
    <property type="match status" value="1"/>
</dbReference>
<dbReference type="PIRSF" id="PIRSF001294">
    <property type="entry name" value="K_ATPaseA"/>
    <property type="match status" value="1"/>
</dbReference>
<comment type="function">
    <text evidence="1">Part of the high-affinity ATP-driven potassium transport (or Kdp) system, which catalyzes the hydrolysis of ATP coupled with the electrogenic transport of potassium into the cytoplasm. This subunit binds the periplasmic potassium ions and delivers the ions to the membrane domain of KdpB through an intramembrane tunnel.</text>
</comment>
<comment type="subunit">
    <text evidence="1">The system is composed of three essential subunits: KdpA, KdpB and KdpC.</text>
</comment>
<comment type="subcellular location">
    <subcellularLocation>
        <location evidence="1">Cell inner membrane</location>
        <topology evidence="1">Multi-pass membrane protein</topology>
    </subcellularLocation>
</comment>
<comment type="similarity">
    <text evidence="1">Belongs to the KdpA family.</text>
</comment>
<evidence type="ECO:0000255" key="1">
    <source>
        <dbReference type="HAMAP-Rule" id="MF_00275"/>
    </source>
</evidence>
<gene>
    <name evidence="1" type="primary">kdpA</name>
    <name type="ordered locus">SG0703</name>
</gene>
<reference key="1">
    <citation type="journal article" date="2008" name="Genome Res.">
        <title>Comparative genome analysis of Salmonella enteritidis PT4 and Salmonella gallinarum 287/91 provides insights into evolutionary and host adaptation pathways.</title>
        <authorList>
            <person name="Thomson N.R."/>
            <person name="Clayton D.J."/>
            <person name="Windhorst D."/>
            <person name="Vernikos G."/>
            <person name="Davidson S."/>
            <person name="Churcher C."/>
            <person name="Quail M.A."/>
            <person name="Stevens M."/>
            <person name="Jones M.A."/>
            <person name="Watson M."/>
            <person name="Barron A."/>
            <person name="Layton A."/>
            <person name="Pickard D."/>
            <person name="Kingsley R.A."/>
            <person name="Bignell A."/>
            <person name="Clark L."/>
            <person name="Harris B."/>
            <person name="Ormond D."/>
            <person name="Abdellah Z."/>
            <person name="Brooks K."/>
            <person name="Cherevach I."/>
            <person name="Chillingworth T."/>
            <person name="Woodward J."/>
            <person name="Norberczak H."/>
            <person name="Lord A."/>
            <person name="Arrowsmith C."/>
            <person name="Jagels K."/>
            <person name="Moule S."/>
            <person name="Mungall K."/>
            <person name="Saunders M."/>
            <person name="Whitehead S."/>
            <person name="Chabalgoity J.A."/>
            <person name="Maskell D."/>
            <person name="Humphreys T."/>
            <person name="Roberts M."/>
            <person name="Barrow P.A."/>
            <person name="Dougan G."/>
            <person name="Parkhill J."/>
        </authorList>
    </citation>
    <scope>NUCLEOTIDE SEQUENCE [LARGE SCALE GENOMIC DNA]</scope>
    <source>
        <strain>287/91 / NCTC 13346</strain>
    </source>
</reference>
<organism>
    <name type="scientific">Salmonella gallinarum (strain 287/91 / NCTC 13346)</name>
    <dbReference type="NCBI Taxonomy" id="550538"/>
    <lineage>
        <taxon>Bacteria</taxon>
        <taxon>Pseudomonadati</taxon>
        <taxon>Pseudomonadota</taxon>
        <taxon>Gammaproteobacteria</taxon>
        <taxon>Enterobacterales</taxon>
        <taxon>Enterobacteriaceae</taxon>
        <taxon>Salmonella</taxon>
    </lineage>
</organism>
<proteinExistence type="inferred from homology"/>
<protein>
    <recommendedName>
        <fullName evidence="1">Potassium-transporting ATPase potassium-binding subunit</fullName>
    </recommendedName>
    <alternativeName>
        <fullName evidence="1">ATP phosphohydrolase [potassium-transporting] A chain</fullName>
    </alternativeName>
    <alternativeName>
        <fullName evidence="1">Potassium-binding and translocating subunit A</fullName>
    </alternativeName>
    <alternativeName>
        <fullName evidence="1">Potassium-translocating ATPase A chain</fullName>
    </alternativeName>
</protein>
<sequence>MAAQGFLLIASFLLILLVLAKPLGSGLARLIAAVPLPGVAGVERILWRTLGITDHEMNWRQYLLALLTLNLLGLGILFCLLFWQEWLPLNPQRLPGLSWDLALNTAVSFVTNTNWQAYSGESTLSYFSQMAGLTVQNFLSAATGIAVVFALIRAFTRQNVHTLGNAWQDLVRITLWILFPVALIIALFFIQQGVPQNLSAYQPITTLEGAKQLLPMGPVASQEAIKMLGTNGGGFFNANSSHPFENPTALTNLAQMLAIFLIPAALCFAFGEAAGDRRQGRALLWAMSFIFVVCVAVVMWAEVQGNPHLLAAGADSSVNMEGKETRFGVLASSLFAVVTTAASCGAVNAMHDSFTALGGMVPMWLMQIGEVVFGGVGSGLYGMLLFVLLAVFIAGLMIGRTPEYLGKKIDVREMKMTALAILVTPMLVLLGSALAMMTDAGRSAMLNPGPHGFSEVLYAVSSAANNNGSAFAGLSANSPFWNCLLAFCMFVGRFGVIIPVMAIAGSLVSKKVQPASQGTLATHGALFIGLLIGTVLLVGALTFIPALALGPVAEHFSLP</sequence>
<feature type="chain" id="PRO_1000114701" description="Potassium-transporting ATPase potassium-binding subunit">
    <location>
        <begin position="1"/>
        <end position="559"/>
    </location>
</feature>
<feature type="transmembrane region" description="Helical" evidence="1">
    <location>
        <begin position="5"/>
        <end position="25"/>
    </location>
</feature>
<feature type="transmembrane region" description="Helical" evidence="1">
    <location>
        <begin position="27"/>
        <end position="47"/>
    </location>
</feature>
<feature type="transmembrane region" description="Helical" evidence="1">
    <location>
        <begin position="63"/>
        <end position="83"/>
    </location>
</feature>
<feature type="transmembrane region" description="Helical" evidence="1">
    <location>
        <begin position="132"/>
        <end position="152"/>
    </location>
</feature>
<feature type="transmembrane region" description="Helical" evidence="1">
    <location>
        <begin position="170"/>
        <end position="190"/>
    </location>
</feature>
<feature type="transmembrane region" description="Helical" evidence="1">
    <location>
        <begin position="253"/>
        <end position="273"/>
    </location>
</feature>
<feature type="transmembrane region" description="Helical" evidence="1">
    <location>
        <begin position="283"/>
        <end position="303"/>
    </location>
</feature>
<feature type="transmembrane region" description="Helical" evidence="1">
    <location>
        <begin position="327"/>
        <end position="347"/>
    </location>
</feature>
<feature type="transmembrane region" description="Helical" evidence="1">
    <location>
        <begin position="356"/>
        <end position="376"/>
    </location>
</feature>
<feature type="transmembrane region" description="Helical" evidence="1">
    <location>
        <begin position="379"/>
        <end position="399"/>
    </location>
</feature>
<feature type="transmembrane region" description="Helical" evidence="1">
    <location>
        <begin position="416"/>
        <end position="436"/>
    </location>
</feature>
<feature type="transmembrane region" description="Helical" evidence="1">
    <location>
        <begin position="484"/>
        <end position="504"/>
    </location>
</feature>
<feature type="transmembrane region" description="Helical" evidence="1">
    <location>
        <begin position="524"/>
        <end position="544"/>
    </location>
</feature>
<accession>B5R671</accession>